<comment type="function">
    <text evidence="1 6 7">Non-signaling receptor for IL1A, IL1B and IL1RN. Reduces IL1B activities. Serves as a decoy receptor by competitive binding to IL1B and preventing its binding to IL1R1. Also modulates cellular response through non-signaling association with IL1RAP after binding to IL1B. IL1R2 (membrane and secreted forms) preferentially binds IL1B and poorly IL1A and IL1RN. The secreted IL1R2 recruits secreted IL1RAP with high affinity; this complex formation may be the dominant mechanism for neutralization of IL1B by secreted/soluble receptors (By similarity).</text>
</comment>
<comment type="subunit">
    <text evidence="1">Associates with IL1RAP to form a non-signaling interleukin-1 receptor complex.</text>
</comment>
<comment type="subcellular location">
    <subcellularLocation>
        <location>Membrane</location>
        <topology>Single-pass type I membrane protein</topology>
    </subcellularLocation>
    <subcellularLocation>
        <location evidence="1">Cell membrane</location>
    </subcellularLocation>
    <subcellularLocation>
        <location evidence="1">Secreted</location>
    </subcellularLocation>
</comment>
<comment type="tissue specificity">
    <text evidence="4">Strongly expressed in B-cells, with levels 21 times higher than IL1R1. In T-cells expressed 5 times more compared with IL1R1.</text>
</comment>
<comment type="PTM">
    <text evidence="1">A soluble form (sIL1R2) can also be produced by proteolytic cleavage at the cell surface (shedding) involving a metalloproteinase.</text>
</comment>
<comment type="similarity">
    <text evidence="8">Belongs to the interleukin-1 receptor family.</text>
</comment>
<sequence>MFILLVLVTGVSAFTTPTVVHTGKVSESPITSEKPTVHGDNCQFRGREFKSELRLEGEPVVLRCPLAPHSDISSSSHSFLTWSKLDSSQLIPRDEPRMWVKGNILWILPAVQQDSGTYICTFRNASHCEQMSVELKVFKNTEASLPHVSYLQISALSTTGLLVCPDLKEFISSNADGKIQWYKGAILLDKGNKEFLSAGDPTRLLISNTSMDDAGYYRCVMTFTYNGQEYNITRNIELRVKGTTTEPIPVIISPLETIPASLGSRLIVPCKVFLGTGTSSNTIVWWLANSTFISAAYPRGRVTEGLHHQYSENDENYVEVSLIFDPVTREDLHTDFKCVASNPRSSQSLHTTVKEVSSTFSWSIALAPLSLIILVVGAIWMRRRCKRRAGKTYGLTKLRTDNQDFPSSPN</sequence>
<accession>P27931</accession>
<proteinExistence type="evidence at protein level"/>
<feature type="signal peptide" evidence="2">
    <location>
        <begin position="1"/>
        <end position="13"/>
    </location>
</feature>
<feature type="chain" id="PRO_0000015440" description="Interleukin-1 receptor type 2, membrane form">
    <location>
        <begin position="14"/>
        <end position="410"/>
    </location>
</feature>
<feature type="chain" id="PRO_0000415349" description="Interleukin-1 receptor type 2, soluble form">
    <location>
        <begin position="14"/>
        <end status="unknown"/>
    </location>
</feature>
<feature type="topological domain" description="Extracellular" evidence="2">
    <location>
        <begin position="14"/>
        <end position="355"/>
    </location>
</feature>
<feature type="transmembrane region" description="Helical" evidence="2">
    <location>
        <begin position="356"/>
        <end position="381"/>
    </location>
</feature>
<feature type="topological domain" description="Cytoplasmic" evidence="2">
    <location>
        <begin position="382"/>
        <end position="410"/>
    </location>
</feature>
<feature type="domain" description="Ig-like C2-type 1">
    <location>
        <begin position="35"/>
        <end position="136"/>
    </location>
</feature>
<feature type="domain" description="Ig-like C2-type 2">
    <location>
        <begin position="146"/>
        <end position="237"/>
    </location>
</feature>
<feature type="domain" description="Ig-like C2-type 3">
    <location>
        <begin position="249"/>
        <end position="357"/>
    </location>
</feature>
<feature type="glycosylation site" description="N-linked (GlcNAc...) asparagine" evidence="2">
    <location>
        <position position="124"/>
    </location>
</feature>
<feature type="glycosylation site" description="N-linked (GlcNAc...) asparagine" evidence="5">
    <location>
        <position position="208"/>
    </location>
</feature>
<feature type="glycosylation site" description="N-linked (GlcNAc...) asparagine" evidence="2">
    <location>
        <position position="231"/>
    </location>
</feature>
<feature type="glycosylation site" description="N-linked (GlcNAc...) asparagine" evidence="2">
    <location>
        <position position="289"/>
    </location>
</feature>
<feature type="disulfide bond" evidence="3">
    <location>
        <begin position="42"/>
        <end position="128"/>
    </location>
</feature>
<feature type="disulfide bond" evidence="3">
    <location>
        <begin position="64"/>
        <end position="120"/>
    </location>
</feature>
<feature type="disulfide bond" evidence="3">
    <location>
        <begin position="164"/>
        <end position="219"/>
    </location>
</feature>
<feature type="disulfide bond" evidence="3">
    <location>
        <begin position="270"/>
        <end position="338"/>
    </location>
</feature>
<protein>
    <recommendedName>
        <fullName>Interleukin-1 receptor type 2</fullName>
        <shortName>IL-1R-2</shortName>
        <shortName>IL-1RT-2</shortName>
        <shortName>IL-1RT2</shortName>
    </recommendedName>
    <alternativeName>
        <fullName>CD121 antigen-like family member B</fullName>
    </alternativeName>
    <alternativeName>
        <fullName>IL-1 type II receptor</fullName>
    </alternativeName>
    <alternativeName>
        <fullName>Interleukin-1 receptor beta</fullName>
        <shortName>IL-1R-beta</shortName>
    </alternativeName>
    <alternativeName>
        <fullName>Interleukin-1 receptor type II</fullName>
    </alternativeName>
    <cdAntigenName>CD121b</cdAntigenName>
    <component>
        <recommendedName>
            <fullName>Interleukin-1 receptor type 2, membrane form</fullName>
            <shortName>mIL-1R2</shortName>
            <shortName>mIL-1RII</shortName>
        </recommendedName>
    </component>
    <component>
        <recommendedName>
            <fullName>Interleukin-1 receptor type 2, soluble form</fullName>
            <shortName>sIL-1R2</shortName>
            <shortName>sIL-1RII</shortName>
        </recommendedName>
    </component>
</protein>
<name>IL1R2_MOUSE</name>
<keyword id="KW-1003">Cell membrane</keyword>
<keyword id="KW-1015">Disulfide bond</keyword>
<keyword id="KW-0325">Glycoprotein</keyword>
<keyword id="KW-0393">Immunoglobulin domain</keyword>
<keyword id="KW-0472">Membrane</keyword>
<keyword id="KW-0675">Receptor</keyword>
<keyword id="KW-1185">Reference proteome</keyword>
<keyword id="KW-0677">Repeat</keyword>
<keyword id="KW-0964">Secreted</keyword>
<keyword id="KW-0732">Signal</keyword>
<keyword id="KW-0812">Transmembrane</keyword>
<keyword id="KW-1133">Transmembrane helix</keyword>
<reference key="1">
    <citation type="journal article" date="1991" name="EMBO J.">
        <title>A novel IL-1 receptor, cloned from B cells by mammalian expression, is expressed in many cell types.</title>
        <authorList>
            <person name="McMahan C.J."/>
            <person name="Slack J.L."/>
            <person name="Mosley B."/>
            <person name="Cosman D."/>
            <person name="Lupton S.D."/>
            <person name="Brunton L.L."/>
            <person name="Grubin C.E."/>
            <person name="Wignall J.M."/>
            <person name="Jenkins N.A."/>
            <person name="Brannan C.I."/>
            <person name="Copeland N.G."/>
            <person name="Huebner K."/>
            <person name="Croce C.M."/>
            <person name="Cannizzarro L.A."/>
            <person name="Benjamin D."/>
            <person name="Dower S.K."/>
            <person name="Spriggs M.K."/>
            <person name="Sims J.E."/>
        </authorList>
    </citation>
    <scope>NUCLEOTIDE SEQUENCE [MRNA]</scope>
</reference>
<reference key="2">
    <citation type="journal article" date="1993" name="Science">
        <title>Interleukin-1 type II receptor: a decoy target for IL-1 that is regulated by IL-4.</title>
        <authorList>
            <person name="Colotta F."/>
            <person name="Re F."/>
            <person name="Muzio M."/>
            <person name="Bertini R."/>
            <person name="Polentarutti N."/>
            <person name="Sironi M."/>
            <person name="Giri J.G."/>
            <person name="Dower S.K."/>
            <person name="Sims J.E."/>
            <person name="Mantovani A."/>
        </authorList>
    </citation>
    <scope>FUNCTION AS DECOY RECEPTOR</scope>
</reference>
<reference key="3">
    <citation type="journal article" date="1998" name="FEBS Lett.">
        <title>Interleukin-1 receptor accessory protein interacts with the type II interleukin-1 receptor.</title>
        <authorList>
            <person name="Malinowsky D."/>
            <person name="Lundkvist J."/>
            <person name="Laye S."/>
            <person name="Bartfai T."/>
        </authorList>
    </citation>
    <scope>FUNCTION</scope>
</reference>
<reference key="4">
    <citation type="journal article" date="2006" name="J. Proteome Res.">
        <title>Proteome-wide characterization of N-glycosylation events by diagonal chromatography.</title>
        <authorList>
            <person name="Ghesquiere B."/>
            <person name="Van Damme J."/>
            <person name="Martens L."/>
            <person name="Vandekerckhove J."/>
            <person name="Gevaert K."/>
        </authorList>
    </citation>
    <scope>GLYCOSYLATION [LARGE SCALE ANALYSIS] AT ASN-208</scope>
    <source>
        <strain>C57BL/6J</strain>
        <tissue>Plasma</tissue>
    </source>
</reference>
<reference key="5">
    <citation type="journal article" date="2005" name="Arthritis Rheum.">
        <title>Soluble interleukin-1 receptor accessory protein ameliorates collagen-induced arthritis by a different mode of action from that of interleukin-1 receptor antagonist.</title>
        <authorList>
            <person name="Smeets R.L."/>
            <person name="Joosten L.A."/>
            <person name="Arntz O.J."/>
            <person name="Bennink M.B."/>
            <person name="Takahashi N."/>
            <person name="Carlsen H."/>
            <person name="Martin M.U."/>
            <person name="van den Berg W.B."/>
            <person name="van de Loo F.A."/>
        </authorList>
    </citation>
    <scope>TISSUE SPECIFICITY</scope>
</reference>
<organism>
    <name type="scientific">Mus musculus</name>
    <name type="common">Mouse</name>
    <dbReference type="NCBI Taxonomy" id="10090"/>
    <lineage>
        <taxon>Eukaryota</taxon>
        <taxon>Metazoa</taxon>
        <taxon>Chordata</taxon>
        <taxon>Craniata</taxon>
        <taxon>Vertebrata</taxon>
        <taxon>Euteleostomi</taxon>
        <taxon>Mammalia</taxon>
        <taxon>Eutheria</taxon>
        <taxon>Euarchontoglires</taxon>
        <taxon>Glires</taxon>
        <taxon>Rodentia</taxon>
        <taxon>Myomorpha</taxon>
        <taxon>Muroidea</taxon>
        <taxon>Muridae</taxon>
        <taxon>Murinae</taxon>
        <taxon>Mus</taxon>
        <taxon>Mus</taxon>
    </lineage>
</organism>
<dbReference type="EMBL" id="X59769">
    <property type="protein sequence ID" value="CAA42440.1"/>
    <property type="molecule type" value="mRNA"/>
</dbReference>
<dbReference type="CCDS" id="CCDS14909.1"/>
<dbReference type="RefSeq" id="NP_034685.1">
    <property type="nucleotide sequence ID" value="NM_010555.5"/>
</dbReference>
<dbReference type="RefSeq" id="XP_011236739.1">
    <property type="nucleotide sequence ID" value="XM_011238437.4"/>
</dbReference>
<dbReference type="RefSeq" id="XP_011236740.1">
    <property type="nucleotide sequence ID" value="XM_011238438.3"/>
</dbReference>
<dbReference type="RefSeq" id="XP_011236741.1">
    <property type="nucleotide sequence ID" value="XM_011238439.2"/>
</dbReference>
<dbReference type="RefSeq" id="XP_011236742.1">
    <property type="nucleotide sequence ID" value="XM_011238440.4"/>
</dbReference>
<dbReference type="RefSeq" id="XP_030106618.1">
    <property type="nucleotide sequence ID" value="XM_030250758.2"/>
</dbReference>
<dbReference type="RefSeq" id="XP_036018115.1">
    <property type="nucleotide sequence ID" value="XM_036162222.1"/>
</dbReference>
<dbReference type="SMR" id="P27931"/>
<dbReference type="BioGRID" id="200626">
    <property type="interactions" value="1"/>
</dbReference>
<dbReference type="FunCoup" id="P27931">
    <property type="interactions" value="860"/>
</dbReference>
<dbReference type="STRING" id="10090.ENSMUSP00000027243"/>
<dbReference type="GlyCosmos" id="P27931">
    <property type="glycosylation" value="4 sites, No reported glycans"/>
</dbReference>
<dbReference type="GlyGen" id="P27931">
    <property type="glycosylation" value="4 sites"/>
</dbReference>
<dbReference type="iPTMnet" id="P27931"/>
<dbReference type="PhosphoSitePlus" id="P27931"/>
<dbReference type="PaxDb" id="10090-ENSMUSP00000027243"/>
<dbReference type="PeptideAtlas" id="P27931"/>
<dbReference type="ProteomicsDB" id="267317"/>
<dbReference type="ABCD" id="P27931">
    <property type="antibodies" value="4 sequenced antibodies"/>
</dbReference>
<dbReference type="Antibodypedia" id="17756">
    <property type="antibodies" value="671 antibodies from 41 providers"/>
</dbReference>
<dbReference type="DNASU" id="16178"/>
<dbReference type="Ensembl" id="ENSMUST00000027243.13">
    <property type="protein sequence ID" value="ENSMUSP00000027243.8"/>
    <property type="gene ID" value="ENSMUSG00000026073.14"/>
</dbReference>
<dbReference type="GeneID" id="16178"/>
<dbReference type="KEGG" id="mmu:16178"/>
<dbReference type="UCSC" id="uc007atu.2">
    <property type="organism name" value="mouse"/>
</dbReference>
<dbReference type="AGR" id="MGI:96546"/>
<dbReference type="CTD" id="7850"/>
<dbReference type="MGI" id="MGI:96546">
    <property type="gene designation" value="Il1r2"/>
</dbReference>
<dbReference type="VEuPathDB" id="HostDB:ENSMUSG00000026073"/>
<dbReference type="eggNOG" id="ENOG502QVTS">
    <property type="taxonomic scope" value="Eukaryota"/>
</dbReference>
<dbReference type="GeneTree" id="ENSGT01090000259985"/>
<dbReference type="HOGENOM" id="CLU_051287_0_0_1"/>
<dbReference type="InParanoid" id="P27931"/>
<dbReference type="OMA" id="LLWWTAN"/>
<dbReference type="OrthoDB" id="9881731at2759"/>
<dbReference type="PhylomeDB" id="P27931"/>
<dbReference type="TreeFam" id="TF325519"/>
<dbReference type="Reactome" id="R-MMU-9020702">
    <property type="pathway name" value="Interleukin-1 signaling"/>
</dbReference>
<dbReference type="BioGRID-ORCS" id="16178">
    <property type="hits" value="3 hits in 77 CRISPR screens"/>
</dbReference>
<dbReference type="ChiTaRS" id="Il1r2">
    <property type="organism name" value="mouse"/>
</dbReference>
<dbReference type="PRO" id="PR:P27931"/>
<dbReference type="Proteomes" id="UP000000589">
    <property type="component" value="Chromosome 1"/>
</dbReference>
<dbReference type="RNAct" id="P27931">
    <property type="molecule type" value="protein"/>
</dbReference>
<dbReference type="Bgee" id="ENSMUSG00000026073">
    <property type="expression patterns" value="Expressed in gastrula and 83 other cell types or tissues"/>
</dbReference>
<dbReference type="ExpressionAtlas" id="P27931">
    <property type="expression patterns" value="baseline and differential"/>
</dbReference>
<dbReference type="GO" id="GO:0005737">
    <property type="term" value="C:cytoplasm"/>
    <property type="evidence" value="ECO:0000314"/>
    <property type="project" value="MGI"/>
</dbReference>
<dbReference type="GO" id="GO:0005576">
    <property type="term" value="C:extracellular region"/>
    <property type="evidence" value="ECO:0007669"/>
    <property type="project" value="UniProtKB-SubCell"/>
</dbReference>
<dbReference type="GO" id="GO:0005886">
    <property type="term" value="C:plasma membrane"/>
    <property type="evidence" value="ECO:0007669"/>
    <property type="project" value="UniProtKB-SubCell"/>
</dbReference>
<dbReference type="GO" id="GO:0019966">
    <property type="term" value="F:interleukin-1 binding"/>
    <property type="evidence" value="ECO:0000353"/>
    <property type="project" value="MGI"/>
</dbReference>
<dbReference type="GO" id="GO:0004908">
    <property type="term" value="F:interleukin-1 receptor activity"/>
    <property type="evidence" value="ECO:0000353"/>
    <property type="project" value="MGI"/>
</dbReference>
<dbReference type="GO" id="GO:0004910">
    <property type="term" value="F:interleukin-1, type II, blocking receptor activity"/>
    <property type="evidence" value="ECO:0007669"/>
    <property type="project" value="InterPro"/>
</dbReference>
<dbReference type="GO" id="GO:1900016">
    <property type="term" value="P:negative regulation of cytokine production involved in inflammatory response"/>
    <property type="evidence" value="ECO:0000315"/>
    <property type="project" value="MGI"/>
</dbReference>
<dbReference type="GO" id="GO:0032690">
    <property type="term" value="P:negative regulation of interleukin-1 alpha production"/>
    <property type="evidence" value="ECO:0000315"/>
    <property type="project" value="MGI"/>
</dbReference>
<dbReference type="GO" id="GO:2000660">
    <property type="term" value="P:negative regulation of interleukin-1-mediated signaling pathway"/>
    <property type="evidence" value="ECO:0000353"/>
    <property type="project" value="MGI"/>
</dbReference>
<dbReference type="GO" id="GO:0010955">
    <property type="term" value="P:negative regulation of protein processing"/>
    <property type="evidence" value="ECO:0000315"/>
    <property type="project" value="MGI"/>
</dbReference>
<dbReference type="GO" id="GO:0016485">
    <property type="term" value="P:protein processing"/>
    <property type="evidence" value="ECO:0000315"/>
    <property type="project" value="MGI"/>
</dbReference>
<dbReference type="FunFam" id="2.60.40.10:FF:001027">
    <property type="entry name" value="Interleukin 1 receptor type 2"/>
    <property type="match status" value="1"/>
</dbReference>
<dbReference type="FunFam" id="2.60.40.10:FF:001326">
    <property type="entry name" value="Interleukin 1 receptor type 2"/>
    <property type="match status" value="1"/>
</dbReference>
<dbReference type="FunFam" id="2.60.40.10:FF:000188">
    <property type="entry name" value="Interleukin-1 receptor accessory protein-like 1"/>
    <property type="match status" value="1"/>
</dbReference>
<dbReference type="Gene3D" id="2.60.40.10">
    <property type="entry name" value="Immunoglobulins"/>
    <property type="match status" value="3"/>
</dbReference>
<dbReference type="InterPro" id="IPR007110">
    <property type="entry name" value="Ig-like_dom"/>
</dbReference>
<dbReference type="InterPro" id="IPR036179">
    <property type="entry name" value="Ig-like_dom_sf"/>
</dbReference>
<dbReference type="InterPro" id="IPR013783">
    <property type="entry name" value="Ig-like_fold"/>
</dbReference>
<dbReference type="InterPro" id="IPR003599">
    <property type="entry name" value="Ig_sub"/>
</dbReference>
<dbReference type="InterPro" id="IPR003598">
    <property type="entry name" value="Ig_sub2"/>
</dbReference>
<dbReference type="InterPro" id="IPR015621">
    <property type="entry name" value="IL-1_rcpt_fam"/>
</dbReference>
<dbReference type="InterPro" id="IPR004074">
    <property type="entry name" value="IL-1_rcpt_I/II-typ"/>
</dbReference>
<dbReference type="InterPro" id="IPR004077">
    <property type="entry name" value="IL-1_rcpt_II-typ"/>
</dbReference>
<dbReference type="InterPro" id="IPR013151">
    <property type="entry name" value="Immunoglobulin_dom"/>
</dbReference>
<dbReference type="PANTHER" id="PTHR11890">
    <property type="entry name" value="INTERLEUKIN-1 RECEPTOR FAMILY MEMBER"/>
    <property type="match status" value="1"/>
</dbReference>
<dbReference type="PANTHER" id="PTHR11890:SF3">
    <property type="entry name" value="INTERLEUKIN-1 RECEPTOR TYPE 2"/>
    <property type="match status" value="1"/>
</dbReference>
<dbReference type="Pfam" id="PF00047">
    <property type="entry name" value="ig"/>
    <property type="match status" value="1"/>
</dbReference>
<dbReference type="PRINTS" id="PR01539">
    <property type="entry name" value="INTRLEUKN1R2"/>
</dbReference>
<dbReference type="PRINTS" id="PR01536">
    <property type="entry name" value="INTRLKN1R12F"/>
</dbReference>
<dbReference type="SMART" id="SM00409">
    <property type="entry name" value="IG"/>
    <property type="match status" value="3"/>
</dbReference>
<dbReference type="SMART" id="SM00408">
    <property type="entry name" value="IGc2"/>
    <property type="match status" value="2"/>
</dbReference>
<dbReference type="SUPFAM" id="SSF48726">
    <property type="entry name" value="Immunoglobulin"/>
    <property type="match status" value="3"/>
</dbReference>
<dbReference type="PROSITE" id="PS50835">
    <property type="entry name" value="IG_LIKE"/>
    <property type="match status" value="3"/>
</dbReference>
<evidence type="ECO:0000250" key="1"/>
<evidence type="ECO:0000255" key="2"/>
<evidence type="ECO:0000255" key="3">
    <source>
        <dbReference type="PROSITE-ProRule" id="PRU00114"/>
    </source>
</evidence>
<evidence type="ECO:0000269" key="4">
    <source>
    </source>
</evidence>
<evidence type="ECO:0000269" key="5">
    <source>
    </source>
</evidence>
<evidence type="ECO:0000269" key="6">
    <source>
    </source>
</evidence>
<evidence type="ECO:0000269" key="7">
    <source>
    </source>
</evidence>
<evidence type="ECO:0000305" key="8"/>
<gene>
    <name type="primary">Il1r2</name>
    <name type="synonym">Il-1r2</name>
    <name type="synonym">Il1rb</name>
</gene>